<feature type="chain" id="PRO_0000435751" description="Secondary metabolism regulator laeA">
    <location>
        <begin position="1"/>
        <end position="316"/>
    </location>
</feature>
<evidence type="ECO:0000250" key="1">
    <source>
        <dbReference type="UniProtKB" id="C8VQG9"/>
    </source>
</evidence>
<evidence type="ECO:0000269" key="2">
    <source>
    </source>
</evidence>
<evidence type="ECO:0000303" key="3">
    <source>
    </source>
</evidence>
<evidence type="ECO:0000305" key="4"/>
<organism>
    <name type="scientific">Gibberella zeae (strain ATCC MYA-4620 / CBS 123657 / FGSC 9075 / NRRL 31084 / PH-1)</name>
    <name type="common">Wheat head blight fungus</name>
    <name type="synonym">Fusarium graminearum</name>
    <dbReference type="NCBI Taxonomy" id="229533"/>
    <lineage>
        <taxon>Eukaryota</taxon>
        <taxon>Fungi</taxon>
        <taxon>Dikarya</taxon>
        <taxon>Ascomycota</taxon>
        <taxon>Pezizomycotina</taxon>
        <taxon>Sordariomycetes</taxon>
        <taxon>Hypocreomycetidae</taxon>
        <taxon>Hypocreales</taxon>
        <taxon>Nectriaceae</taxon>
        <taxon>Fusarium</taxon>
    </lineage>
</organism>
<dbReference type="EC" id="2.1.1.-" evidence="1"/>
<dbReference type="EMBL" id="DS231663">
    <property type="protein sequence ID" value="ESU05865.1"/>
    <property type="status" value="ALT_SEQ"/>
    <property type="molecule type" value="Genomic_DNA"/>
</dbReference>
<dbReference type="EMBL" id="HG970332">
    <property type="protein sequence ID" value="CEF72628.1"/>
    <property type="molecule type" value="Genomic_DNA"/>
</dbReference>
<dbReference type="RefSeq" id="XP_011316350.1">
    <property type="nucleotide sequence ID" value="XM_011318048.1"/>
</dbReference>
<dbReference type="SMR" id="I1RAW4"/>
<dbReference type="STRING" id="229533.I1RAW4"/>
<dbReference type="GeneID" id="23548139"/>
<dbReference type="KEGG" id="fgr:FGSG_00657"/>
<dbReference type="VEuPathDB" id="FungiDB:FGRAMPH1_01G01655"/>
<dbReference type="HOGENOM" id="CLU_010595_2_0_1"/>
<dbReference type="InParanoid" id="I1RAW4"/>
<dbReference type="OrthoDB" id="117534at110618"/>
<dbReference type="PHI-base" id="PHI:7193"/>
<dbReference type="Proteomes" id="UP000070720">
    <property type="component" value="Chromosome 1"/>
</dbReference>
<dbReference type="GO" id="GO:0005737">
    <property type="term" value="C:cytoplasm"/>
    <property type="evidence" value="ECO:0007669"/>
    <property type="project" value="UniProtKB-SubCell"/>
</dbReference>
<dbReference type="GO" id="GO:0005634">
    <property type="term" value="C:nucleus"/>
    <property type="evidence" value="ECO:0007669"/>
    <property type="project" value="UniProtKB-SubCell"/>
</dbReference>
<dbReference type="GO" id="GO:0008168">
    <property type="term" value="F:methyltransferase activity"/>
    <property type="evidence" value="ECO:0007669"/>
    <property type="project" value="UniProtKB-KW"/>
</dbReference>
<dbReference type="GO" id="GO:0032259">
    <property type="term" value="P:methylation"/>
    <property type="evidence" value="ECO:0007669"/>
    <property type="project" value="UniProtKB-KW"/>
</dbReference>
<dbReference type="GO" id="GO:0030435">
    <property type="term" value="P:sporulation resulting in formation of a cellular spore"/>
    <property type="evidence" value="ECO:0007669"/>
    <property type="project" value="UniProtKB-KW"/>
</dbReference>
<dbReference type="CDD" id="cd02440">
    <property type="entry name" value="AdoMet_MTases"/>
    <property type="match status" value="1"/>
</dbReference>
<dbReference type="Gene3D" id="3.40.50.150">
    <property type="entry name" value="Vaccinia Virus protein VP39"/>
    <property type="match status" value="1"/>
</dbReference>
<dbReference type="InterPro" id="IPR029063">
    <property type="entry name" value="SAM-dependent_MTases_sf"/>
</dbReference>
<dbReference type="Pfam" id="PF13489">
    <property type="entry name" value="Methyltransf_23"/>
    <property type="match status" value="1"/>
</dbReference>
<dbReference type="SUPFAM" id="SSF53335">
    <property type="entry name" value="S-adenosyl-L-methionine-dependent methyltransferases"/>
    <property type="match status" value="1"/>
</dbReference>
<proteinExistence type="evidence at protein level"/>
<accession>I1RAW4</accession>
<accession>A0A0E0RN03</accession>
<gene>
    <name evidence="3" type="primary">laeA</name>
    <name type="ORF">FGRRES_15765</name>
    <name type="ORF">FGSG_00657</name>
</gene>
<keyword id="KW-0963">Cytoplasm</keyword>
<keyword id="KW-0489">Methyltransferase</keyword>
<keyword id="KW-0539">Nucleus</keyword>
<keyword id="KW-1185">Reference proteome</keyword>
<keyword id="KW-0949">S-adenosyl-L-methionine</keyword>
<keyword id="KW-0749">Sporulation</keyword>
<keyword id="KW-0804">Transcription</keyword>
<keyword id="KW-0805">Transcription regulation</keyword>
<keyword id="KW-0808">Transferase</keyword>
<keyword id="KW-0843">Virulence</keyword>
<protein>
    <recommendedName>
        <fullName evidence="4">Secondary metabolism regulator laeA</fullName>
    </recommendedName>
    <alternativeName>
        <fullName evidence="4">Methyltransferase laeA</fullName>
        <ecNumber evidence="1">2.1.1.-</ecNumber>
    </alternativeName>
    <alternativeName>
        <fullName evidence="4">Velvet complex subunit laeA</fullName>
    </alternativeName>
</protein>
<comment type="function">
    <text evidence="1 2">Methyltransferase that performs automethylation (By similarity). No other methyl-accepting substrate has been identified yet (By similarity). Component of the velvet transcription factor complex that acts as a global regulator for secondary metabolite gene expression (PubMed:23874628). Controls the expression of the mycotoxins trichothecenes and zearalenon gene clusters (PubMed:23874628). Negatively controls perithecial induction, but positively controls virulence toward the host plant (PubMed:23874628).</text>
</comment>
<comment type="catalytic activity">
    <reaction evidence="1">
        <text>L-methionyl-[protein] + S-adenosyl-L-methionine = S-methyl-L-methionyl-[protein] + S-adenosyl-L-homocysteine</text>
        <dbReference type="Rhea" id="RHEA:60560"/>
        <dbReference type="Rhea" id="RHEA-COMP:12313"/>
        <dbReference type="Rhea" id="RHEA-COMP:15592"/>
        <dbReference type="ChEBI" id="CHEBI:16044"/>
        <dbReference type="ChEBI" id="CHEBI:57856"/>
        <dbReference type="ChEBI" id="CHEBI:59789"/>
        <dbReference type="ChEBI" id="CHEBI:142742"/>
    </reaction>
    <physiologicalReaction direction="left-to-right" evidence="1">
        <dbReference type="Rhea" id="RHEA:60561"/>
    </physiologicalReaction>
</comment>
<comment type="subunit">
    <text evidence="1 2">Component of the heterotrimeric velvet complex composed of laeA, ve1 and velB; Ve1 acting as a bridging protein between laeA and velB (By similarity). Interacts directly with veA (PubMed:23874628).</text>
</comment>
<comment type="subcellular location">
    <subcellularLocation>
        <location evidence="2">Nucleus</location>
    </subcellularLocation>
    <subcellularLocation>
        <location evidence="2">Cytoplasm</location>
    </subcellularLocation>
</comment>
<comment type="induction">
    <text evidence="2">Constitutively expressed under both trichothecenes mycotoxin production and sexual development conditions (PubMed:23874628).</text>
</comment>
<comment type="disruption phenotype">
    <text evidence="2">Strongly reduces expression of the transcription factors TRI6 and ZEB2 that control the biosynthesis of the mycotoxins trichothecenes and zearalenon, respectively (PubMed:23874628). Exhibits an earlier induction of sexual fruiting body (perithecia) formation and drastically reduces disease symptoms in wheat (PubMed:23874628).</text>
</comment>
<comment type="similarity">
    <text evidence="4">Belongs to the methyltransferase superfamily. LaeA methyltransferase family.</text>
</comment>
<comment type="sequence caution" evidence="4">
    <conflict type="erroneous gene model prediction">
        <sequence resource="EMBL-CDS" id="ESU05865"/>
    </conflict>
</comment>
<reference key="1">
    <citation type="journal article" date="2007" name="Science">
        <title>The Fusarium graminearum genome reveals a link between localized polymorphism and pathogen specialization.</title>
        <authorList>
            <person name="Cuomo C.A."/>
            <person name="Gueldener U."/>
            <person name="Xu J.-R."/>
            <person name="Trail F."/>
            <person name="Turgeon B.G."/>
            <person name="Di Pietro A."/>
            <person name="Walton J.D."/>
            <person name="Ma L.-J."/>
            <person name="Baker S.E."/>
            <person name="Rep M."/>
            <person name="Adam G."/>
            <person name="Antoniw J."/>
            <person name="Baldwin T."/>
            <person name="Calvo S.E."/>
            <person name="Chang Y.-L."/>
            <person name="DeCaprio D."/>
            <person name="Gale L.R."/>
            <person name="Gnerre S."/>
            <person name="Goswami R.S."/>
            <person name="Hammond-Kosack K."/>
            <person name="Harris L.J."/>
            <person name="Hilburn K."/>
            <person name="Kennell J.C."/>
            <person name="Kroken S."/>
            <person name="Magnuson J.K."/>
            <person name="Mannhaupt G."/>
            <person name="Mauceli E.W."/>
            <person name="Mewes H.-W."/>
            <person name="Mitterbauer R."/>
            <person name="Muehlbauer G."/>
            <person name="Muensterkoetter M."/>
            <person name="Nelson D."/>
            <person name="O'Donnell K."/>
            <person name="Ouellet T."/>
            <person name="Qi W."/>
            <person name="Quesneville H."/>
            <person name="Roncero M.I.G."/>
            <person name="Seong K.-Y."/>
            <person name="Tetko I.V."/>
            <person name="Urban M."/>
            <person name="Waalwijk C."/>
            <person name="Ward T.J."/>
            <person name="Yao J."/>
            <person name="Birren B.W."/>
            <person name="Kistler H.C."/>
        </authorList>
    </citation>
    <scope>NUCLEOTIDE SEQUENCE [LARGE SCALE GENOMIC DNA]</scope>
    <source>
        <strain>ATCC MYA-4620 / CBS 123657 / FGSC 9075 / NRRL 31084 / PH-1</strain>
    </source>
</reference>
<reference key="2">
    <citation type="journal article" date="2010" name="Nature">
        <title>Comparative genomics reveals mobile pathogenicity chromosomes in Fusarium.</title>
        <authorList>
            <person name="Ma L.-J."/>
            <person name="van der Does H.C."/>
            <person name="Borkovich K.A."/>
            <person name="Coleman J.J."/>
            <person name="Daboussi M.-J."/>
            <person name="Di Pietro A."/>
            <person name="Dufresne M."/>
            <person name="Freitag M."/>
            <person name="Grabherr M."/>
            <person name="Henrissat B."/>
            <person name="Houterman P.M."/>
            <person name="Kang S."/>
            <person name="Shim W.-B."/>
            <person name="Woloshuk C."/>
            <person name="Xie X."/>
            <person name="Xu J.-R."/>
            <person name="Antoniw J."/>
            <person name="Baker S.E."/>
            <person name="Bluhm B.H."/>
            <person name="Breakspear A."/>
            <person name="Brown D.W."/>
            <person name="Butchko R.A.E."/>
            <person name="Chapman S."/>
            <person name="Coulson R."/>
            <person name="Coutinho P.M."/>
            <person name="Danchin E.G.J."/>
            <person name="Diener A."/>
            <person name="Gale L.R."/>
            <person name="Gardiner D.M."/>
            <person name="Goff S."/>
            <person name="Hammond-Kosack K.E."/>
            <person name="Hilburn K."/>
            <person name="Hua-Van A."/>
            <person name="Jonkers W."/>
            <person name="Kazan K."/>
            <person name="Kodira C.D."/>
            <person name="Koehrsen M."/>
            <person name="Kumar L."/>
            <person name="Lee Y.-H."/>
            <person name="Li L."/>
            <person name="Manners J.M."/>
            <person name="Miranda-Saavedra D."/>
            <person name="Mukherjee M."/>
            <person name="Park G."/>
            <person name="Park J."/>
            <person name="Park S.-Y."/>
            <person name="Proctor R.H."/>
            <person name="Regev A."/>
            <person name="Ruiz-Roldan M.C."/>
            <person name="Sain D."/>
            <person name="Sakthikumar S."/>
            <person name="Sykes S."/>
            <person name="Schwartz D.C."/>
            <person name="Turgeon B.G."/>
            <person name="Wapinski I."/>
            <person name="Yoder O."/>
            <person name="Young S."/>
            <person name="Zeng Q."/>
            <person name="Zhou S."/>
            <person name="Galagan J."/>
            <person name="Cuomo C.A."/>
            <person name="Kistler H.C."/>
            <person name="Rep M."/>
        </authorList>
    </citation>
    <scope>GENOME REANNOTATION</scope>
    <source>
        <strain>ATCC MYA-4620 / CBS 123657 / FGSC 9075 / NRRL 31084 / PH-1</strain>
    </source>
</reference>
<reference key="3">
    <citation type="journal article" date="2015" name="BMC Genomics">
        <title>The completed genome sequence of the pathogenic ascomycete fungus Fusarium graminearum.</title>
        <authorList>
            <person name="King R."/>
            <person name="Urban M."/>
            <person name="Hammond-Kosack M.C.U."/>
            <person name="Hassani-Pak K."/>
            <person name="Hammond-Kosack K.E."/>
        </authorList>
    </citation>
    <scope>NUCLEOTIDE SEQUENCE [LARGE SCALE GENOMIC DNA]</scope>
    <source>
        <strain>ATCC MYA-4620 / CBS 123657 / FGSC 9075 / NRRL 31084 / PH-1</strain>
    </source>
</reference>
<reference key="4">
    <citation type="journal article" date="2013" name="PLoS ONE">
        <title>Functional roles of FgLaeA in controlling secondary metabolism, sexual development, and virulence in Fusarium graminearum.</title>
        <authorList>
            <person name="Kim H.K."/>
            <person name="Lee S."/>
            <person name="Jo S.M."/>
            <person name="McCormick S.P."/>
            <person name="Butchko R.A."/>
            <person name="Proctor R.H."/>
            <person name="Yun S.H."/>
        </authorList>
    </citation>
    <scope>FUNCTION</scope>
    <scope>DISRUPTION PHENOTYPE</scope>
    <scope>SUBCELLULAR LOCATION</scope>
    <scope>INTERACTION WITH VEA</scope>
</reference>
<sequence>MAVMPPPNSVNGSERRYLEDGIWQHGRFYGSWKPGKYLFPIDSEELNRLDIFHKVFLLARDNKPFQAPIQRKAPRMMDIGTGTGIWPINVAEECFTDAQIMAVDLNQILPALIPPGVLPKQYDIEEPTWDSLYTDCDFIHMRMLLGSIQTDLWPQVYRNIFEHLAPGIGHLEHIEVDWTPRCDDDERPANSAFEKWAELFFDGMDRFNRIARVVPQETRQLLEATGFTDVKQEMIRAYVCPWSSDRQEREIARWFNIGLSHSLESLSLKPLVEKLGWKPEDVRKLCTTAKRETCVLRFHTYCNIYVWTARKPGPPQ</sequence>
<name>LAEA_GIBZE</name>